<protein>
    <recommendedName>
        <fullName evidence="1">2-oxoglutarate dehydrogenase E1 component</fullName>
        <ecNumber evidence="1">1.2.4.2</ecNumber>
    </recommendedName>
    <alternativeName>
        <fullName evidence="1">Alpha-ketoglutarate dehydrogenase</fullName>
    </alternativeName>
</protein>
<accession>Q5HPC6</accession>
<evidence type="ECO:0000255" key="1">
    <source>
        <dbReference type="HAMAP-Rule" id="MF_01169"/>
    </source>
</evidence>
<proteinExistence type="inferred from homology"/>
<sequence>MTKNKKEFTEAPVNFGANLGLMLDLYDDYLQDPSSVPEDLQVLFSTIKTGEAHIEAKPTTDGGGSQAGDSTIKRVMRLIDNIRQYGHLKADIYPVNPPERQNVPKLEIEDFDLDKETLEKISSGIVSEHFKDIYDNAYDAIVRMERRYKGPIAFEYTHINNNKERVWLKRRIETPYKASLNDNQKKELFKKLAHVEGFEKYLHKNFVGAKRFSIEGVDTLVPMLQHTITLAGNEGIKNIQIGMAHRGRLNVLTHVLEKPYEMMISEFMHTDPMKFLPEDGSLELTSGWTSDVKYHLGGVKTTNSYGIEQRISLANNPSHLEIVAPVVAGKTRAAQDNTHQVGGPSTDFHKAMPIIIHGDAAYPGQGINFETMNLGSLKGYSTGGSLHIITNNRIGFTTEPFDGRSTTYSSDVAKGYDVPILHVNADDVEATIEAIEIAMEFRKEFHKDVVIDLVGYRRYGHNEMDEPSITNPVPYQNIRKHDSVEILYGKKLVDEGIISEDEMNEVIDSVQKEMRTAHDKIDKNDKMNNPDMEKPESLQLPLQSDTKDFSFDHLKEINDAMLDYPKDFHVLKKLNKVLEKRREPFEKEGGLVDWAQAEQLAFATILQDGTSIRLTGQDSERGTFSHRHAVLHDEENGNTFTPLHHVPQQQATFDIHNSPLSEAAVVGFEYGYNVENKGNFNIWEAQYGDFSNMSQMMFDNFLSSSRAKWGERSGLTLFLPHAFEGQGPEHSSARLERFLQLAAENNSTVVNLSSASNYFHLLRAQAASLDTLEMRPLIVMSPKSLLRNKTVAKPIDEFTSGGFKPIITEDIDEQKVKKVILASGKMYIDLKEYLAKNPNDSILLIAVERLYPFPEEEIKEVLKSLPHLENVSWVQEEPKNQGAWLFVYPYLKALVANKYDLTYHGRIQRAAPAEGDGEIHKLVQTKIIESSINN</sequence>
<name>ODO1_STAEQ</name>
<reference key="1">
    <citation type="journal article" date="2005" name="J. Bacteriol.">
        <title>Insights on evolution of virulence and resistance from the complete genome analysis of an early methicillin-resistant Staphylococcus aureus strain and a biofilm-producing methicillin-resistant Staphylococcus epidermidis strain.</title>
        <authorList>
            <person name="Gill S.R."/>
            <person name="Fouts D.E."/>
            <person name="Archer G.L."/>
            <person name="Mongodin E.F."/>
            <person name="DeBoy R.T."/>
            <person name="Ravel J."/>
            <person name="Paulsen I.T."/>
            <person name="Kolonay J.F."/>
            <person name="Brinkac L.M."/>
            <person name="Beanan M.J."/>
            <person name="Dodson R.J."/>
            <person name="Daugherty S.C."/>
            <person name="Madupu R."/>
            <person name="Angiuoli S.V."/>
            <person name="Durkin A.S."/>
            <person name="Haft D.H."/>
            <person name="Vamathevan J.J."/>
            <person name="Khouri H."/>
            <person name="Utterback T.R."/>
            <person name="Lee C."/>
            <person name="Dimitrov G."/>
            <person name="Jiang L."/>
            <person name="Qin H."/>
            <person name="Weidman J."/>
            <person name="Tran K."/>
            <person name="Kang K.H."/>
            <person name="Hance I.R."/>
            <person name="Nelson K.E."/>
            <person name="Fraser C.M."/>
        </authorList>
    </citation>
    <scope>NUCLEOTIDE SEQUENCE [LARGE SCALE GENOMIC DNA]</scope>
    <source>
        <strain>ATCC 35984 / DSM 28319 / BCRC 17069 / CCUG 31568 / BM 3577 / RP62A</strain>
    </source>
</reference>
<dbReference type="EC" id="1.2.4.2" evidence="1"/>
<dbReference type="EMBL" id="CP000029">
    <property type="protein sequence ID" value="AAW54333.1"/>
    <property type="molecule type" value="Genomic_DNA"/>
</dbReference>
<dbReference type="RefSeq" id="WP_002446425.1">
    <property type="nucleotide sequence ID" value="NC_002976.3"/>
</dbReference>
<dbReference type="SMR" id="Q5HPC6"/>
<dbReference type="STRING" id="176279.SERP0986"/>
<dbReference type="KEGG" id="ser:SERP0986"/>
<dbReference type="eggNOG" id="COG0567">
    <property type="taxonomic scope" value="Bacteria"/>
</dbReference>
<dbReference type="HOGENOM" id="CLU_004709_1_0_9"/>
<dbReference type="Proteomes" id="UP000000531">
    <property type="component" value="Chromosome"/>
</dbReference>
<dbReference type="GO" id="GO:0005829">
    <property type="term" value="C:cytosol"/>
    <property type="evidence" value="ECO:0007669"/>
    <property type="project" value="TreeGrafter"/>
</dbReference>
<dbReference type="GO" id="GO:0045252">
    <property type="term" value="C:oxoglutarate dehydrogenase complex"/>
    <property type="evidence" value="ECO:0007669"/>
    <property type="project" value="TreeGrafter"/>
</dbReference>
<dbReference type="GO" id="GO:0004591">
    <property type="term" value="F:oxoglutarate dehydrogenase (succinyl-transferring) activity"/>
    <property type="evidence" value="ECO:0007669"/>
    <property type="project" value="UniProtKB-UniRule"/>
</dbReference>
<dbReference type="GO" id="GO:0030976">
    <property type="term" value="F:thiamine pyrophosphate binding"/>
    <property type="evidence" value="ECO:0007669"/>
    <property type="project" value="UniProtKB-UniRule"/>
</dbReference>
<dbReference type="GO" id="GO:0006096">
    <property type="term" value="P:glycolytic process"/>
    <property type="evidence" value="ECO:0007669"/>
    <property type="project" value="UniProtKB-UniRule"/>
</dbReference>
<dbReference type="GO" id="GO:0006099">
    <property type="term" value="P:tricarboxylic acid cycle"/>
    <property type="evidence" value="ECO:0007669"/>
    <property type="project" value="TreeGrafter"/>
</dbReference>
<dbReference type="CDD" id="cd02016">
    <property type="entry name" value="TPP_E1_OGDC_like"/>
    <property type="match status" value="1"/>
</dbReference>
<dbReference type="FunFam" id="3.40.50.970:FF:000036">
    <property type="entry name" value="2-oxoglutarate dehydrogenase E1 component"/>
    <property type="match status" value="1"/>
</dbReference>
<dbReference type="Gene3D" id="3.40.50.12470">
    <property type="match status" value="1"/>
</dbReference>
<dbReference type="Gene3D" id="3.40.50.970">
    <property type="match status" value="1"/>
</dbReference>
<dbReference type="Gene3D" id="3.40.50.11610">
    <property type="entry name" value="Multifunctional 2-oxoglutarate metabolism enzyme, C-terminal domain"/>
    <property type="match status" value="1"/>
</dbReference>
<dbReference type="Gene3D" id="1.10.287.1150">
    <property type="entry name" value="TPP helical domain"/>
    <property type="match status" value="1"/>
</dbReference>
<dbReference type="HAMAP" id="MF_01169">
    <property type="entry name" value="SucA_OdhA"/>
    <property type="match status" value="1"/>
</dbReference>
<dbReference type="InterPro" id="IPR011603">
    <property type="entry name" value="2oxoglutarate_DH_E1"/>
</dbReference>
<dbReference type="InterPro" id="IPR023784">
    <property type="entry name" value="2oxoglutarate_DH_E1_bac"/>
</dbReference>
<dbReference type="InterPro" id="IPR001017">
    <property type="entry name" value="DH_E1"/>
</dbReference>
<dbReference type="InterPro" id="IPR042179">
    <property type="entry name" value="KGD_C_sf"/>
</dbReference>
<dbReference type="InterPro" id="IPR031717">
    <property type="entry name" value="ODO-1/KGD_C"/>
</dbReference>
<dbReference type="InterPro" id="IPR029061">
    <property type="entry name" value="THDP-binding"/>
</dbReference>
<dbReference type="InterPro" id="IPR005475">
    <property type="entry name" value="Transketolase-like_Pyr-bd"/>
</dbReference>
<dbReference type="NCBIfam" id="TIGR00239">
    <property type="entry name" value="2oxo_dh_E1"/>
    <property type="match status" value="1"/>
</dbReference>
<dbReference type="NCBIfam" id="NF006914">
    <property type="entry name" value="PRK09404.1"/>
    <property type="match status" value="1"/>
</dbReference>
<dbReference type="NCBIfam" id="NF008907">
    <property type="entry name" value="PRK12270.1"/>
    <property type="match status" value="1"/>
</dbReference>
<dbReference type="PANTHER" id="PTHR23152:SF4">
    <property type="entry name" value="2-OXOADIPATE DEHYDROGENASE COMPLEX COMPONENT E1"/>
    <property type="match status" value="1"/>
</dbReference>
<dbReference type="PANTHER" id="PTHR23152">
    <property type="entry name" value="2-OXOGLUTARATE DEHYDROGENASE"/>
    <property type="match status" value="1"/>
</dbReference>
<dbReference type="Pfam" id="PF00676">
    <property type="entry name" value="E1_dh"/>
    <property type="match status" value="1"/>
</dbReference>
<dbReference type="Pfam" id="PF16870">
    <property type="entry name" value="OxoGdeHyase_C"/>
    <property type="match status" value="1"/>
</dbReference>
<dbReference type="Pfam" id="PF02779">
    <property type="entry name" value="Transket_pyr"/>
    <property type="match status" value="1"/>
</dbReference>
<dbReference type="PIRSF" id="PIRSF000157">
    <property type="entry name" value="Oxoglu_dh_E1"/>
    <property type="match status" value="1"/>
</dbReference>
<dbReference type="SMART" id="SM00861">
    <property type="entry name" value="Transket_pyr"/>
    <property type="match status" value="1"/>
</dbReference>
<dbReference type="SUPFAM" id="SSF52518">
    <property type="entry name" value="Thiamin diphosphate-binding fold (THDP-binding)"/>
    <property type="match status" value="2"/>
</dbReference>
<feature type="chain" id="PRO_0000162182" description="2-oxoglutarate dehydrogenase E1 component">
    <location>
        <begin position="1"/>
        <end position="934"/>
    </location>
</feature>
<comment type="function">
    <text evidence="1">E1 component of the 2-oxoglutarate dehydrogenase (OGDH) complex which catalyzes the decarboxylation of 2-oxoglutarate, the first step in the conversion of 2-oxoglutarate to succinyl-CoA and CO(2).</text>
</comment>
<comment type="catalytic activity">
    <reaction evidence="1">
        <text>N(6)-[(R)-lipoyl]-L-lysyl-[protein] + 2-oxoglutarate + H(+) = N(6)-[(R)-S(8)-succinyldihydrolipoyl]-L-lysyl-[protein] + CO2</text>
        <dbReference type="Rhea" id="RHEA:12188"/>
        <dbReference type="Rhea" id="RHEA-COMP:10474"/>
        <dbReference type="Rhea" id="RHEA-COMP:20092"/>
        <dbReference type="ChEBI" id="CHEBI:15378"/>
        <dbReference type="ChEBI" id="CHEBI:16526"/>
        <dbReference type="ChEBI" id="CHEBI:16810"/>
        <dbReference type="ChEBI" id="CHEBI:83099"/>
        <dbReference type="ChEBI" id="CHEBI:83120"/>
        <dbReference type="EC" id="1.2.4.2"/>
    </reaction>
</comment>
<comment type="cofactor">
    <cofactor evidence="1">
        <name>thiamine diphosphate</name>
        <dbReference type="ChEBI" id="CHEBI:58937"/>
    </cofactor>
</comment>
<comment type="subunit">
    <text evidence="1">Homodimer. Part of the 2-oxoglutarate dehydrogenase (OGDH) complex composed of E1 (2-oxoglutarate dehydrogenase), E2 (dihydrolipoamide succinyltransferase) and E3 (dihydrolipoamide dehydrogenase); the complex contains multiple copies of the three enzymatic components (E1, E2 and E3).</text>
</comment>
<comment type="similarity">
    <text evidence="1">Belongs to the alpha-ketoglutarate dehydrogenase family.</text>
</comment>
<gene>
    <name evidence="1" type="primary">odhA</name>
    <name type="ordered locus">SERP0986</name>
</gene>
<keyword id="KW-0324">Glycolysis</keyword>
<keyword id="KW-0560">Oxidoreductase</keyword>
<keyword id="KW-1185">Reference proteome</keyword>
<keyword id="KW-0786">Thiamine pyrophosphate</keyword>
<organism>
    <name type="scientific">Staphylococcus epidermidis (strain ATCC 35984 / DSM 28319 / BCRC 17069 / CCUG 31568 / BM 3577 / RP62A)</name>
    <dbReference type="NCBI Taxonomy" id="176279"/>
    <lineage>
        <taxon>Bacteria</taxon>
        <taxon>Bacillati</taxon>
        <taxon>Bacillota</taxon>
        <taxon>Bacilli</taxon>
        <taxon>Bacillales</taxon>
        <taxon>Staphylococcaceae</taxon>
        <taxon>Staphylococcus</taxon>
    </lineage>
</organism>